<protein>
    <recommendedName>
        <fullName>Nuclear receptor subfamily 6 group A member 1</fullName>
    </recommendedName>
    <alternativeName>
        <fullName>Germ cell nuclear factor</fullName>
        <shortName>GCNF</shortName>
    </alternativeName>
</protein>
<feature type="chain" id="PRO_0000289152" description="Nuclear receptor subfamily 6 group A member 1">
    <location>
        <begin position="1"/>
        <end position="435"/>
    </location>
</feature>
<feature type="domain" description="NR LBD" evidence="4">
    <location>
        <begin position="204"/>
        <end position="435"/>
    </location>
</feature>
<feature type="DNA-binding region" description="Nuclear receptor" evidence="3">
    <location>
        <begin position="11"/>
        <end position="86"/>
    </location>
</feature>
<feature type="zinc finger region" description="NR C4-type" evidence="3">
    <location>
        <begin position="14"/>
        <end position="34"/>
    </location>
</feature>
<feature type="zinc finger region" description="NR C4-type" evidence="3">
    <location>
        <begin position="50"/>
        <end position="69"/>
    </location>
</feature>
<feature type="region of interest" description="Disordered" evidence="5">
    <location>
        <begin position="84"/>
        <end position="157"/>
    </location>
</feature>
<feature type="compositionally biased region" description="Polar residues" evidence="5">
    <location>
        <begin position="121"/>
        <end position="141"/>
    </location>
</feature>
<feature type="compositionally biased region" description="Low complexity" evidence="5">
    <location>
        <begin position="142"/>
        <end position="156"/>
    </location>
</feature>
<feature type="splice variant" id="VSP_052453" description="In isoform Oo." evidence="7">
    <original>MDTWE</original>
    <variation>MEVEKGASGLMDSPGFYKEPAGENEHTAGNMSDLSSDGFKMNSLV</variation>
    <location>
        <begin position="1"/>
        <end position="5"/>
    </location>
</feature>
<dbReference type="EMBL" id="AL630347">
    <property type="status" value="NOT_ANNOTATED_CDS"/>
    <property type="molecule type" value="mRNA"/>
</dbReference>
<dbReference type="EMBL" id="CR760283">
    <property type="protein sequence ID" value="CAJ83090.1"/>
    <property type="molecule type" value="mRNA"/>
</dbReference>
<dbReference type="EMBL" id="BC080883">
    <property type="protein sequence ID" value="AAH80883.1"/>
    <property type="molecule type" value="mRNA"/>
</dbReference>
<dbReference type="RefSeq" id="NP_001008005.1">
    <molecule id="Q66JK1-1"/>
    <property type="nucleotide sequence ID" value="NM_001008004.1"/>
</dbReference>
<dbReference type="RefSeq" id="XP_012823721.1">
    <molecule id="Q66JK1-2"/>
    <property type="nucleotide sequence ID" value="XM_012968267.2"/>
</dbReference>
<dbReference type="SMR" id="Q66JK1"/>
<dbReference type="FunCoup" id="Q66JK1">
    <property type="interactions" value="914"/>
</dbReference>
<dbReference type="STRING" id="8364.ENSXETP00000003672"/>
<dbReference type="PaxDb" id="8364-ENSXETP00000018759"/>
<dbReference type="DNASU" id="493367"/>
<dbReference type="GeneID" id="493367"/>
<dbReference type="KEGG" id="xtr:493367"/>
<dbReference type="AGR" id="Xenbase:XB-GENE-487592"/>
<dbReference type="CTD" id="2649"/>
<dbReference type="Xenbase" id="XB-GENE-487592">
    <property type="gene designation" value="nr6a1"/>
</dbReference>
<dbReference type="eggNOG" id="KOG3575">
    <property type="taxonomic scope" value="Eukaryota"/>
</dbReference>
<dbReference type="HOGENOM" id="CLU_007368_6_1_1"/>
<dbReference type="InParanoid" id="Q66JK1"/>
<dbReference type="OMA" id="GYYACSV"/>
<dbReference type="OrthoDB" id="10006908at2759"/>
<dbReference type="TreeFam" id="TF350737"/>
<dbReference type="Reactome" id="R-XTR-383280">
    <property type="pathway name" value="Nuclear Receptor transcription pathway"/>
</dbReference>
<dbReference type="Proteomes" id="UP000008143">
    <property type="component" value="Chromosome 8"/>
</dbReference>
<dbReference type="Bgee" id="ENSXETG00000008578">
    <property type="expression patterns" value="Expressed in neurula embryo and 7 other cell types or tissues"/>
</dbReference>
<dbReference type="ExpressionAtlas" id="Q66JK1">
    <property type="expression patterns" value="baseline"/>
</dbReference>
<dbReference type="GO" id="GO:0005737">
    <property type="term" value="C:cytoplasm"/>
    <property type="evidence" value="ECO:0000250"/>
    <property type="project" value="UniProtKB"/>
</dbReference>
<dbReference type="GO" id="GO:0005634">
    <property type="term" value="C:nucleus"/>
    <property type="evidence" value="ECO:0000250"/>
    <property type="project" value="UniProtKB"/>
</dbReference>
<dbReference type="GO" id="GO:0003700">
    <property type="term" value="F:DNA-binding transcription factor activity"/>
    <property type="evidence" value="ECO:0007669"/>
    <property type="project" value="InterPro"/>
</dbReference>
<dbReference type="GO" id="GO:0042803">
    <property type="term" value="F:protein homodimerization activity"/>
    <property type="evidence" value="ECO:0000250"/>
    <property type="project" value="UniProtKB"/>
</dbReference>
<dbReference type="GO" id="GO:0043565">
    <property type="term" value="F:sequence-specific DNA binding"/>
    <property type="evidence" value="ECO:0000250"/>
    <property type="project" value="UniProtKB"/>
</dbReference>
<dbReference type="GO" id="GO:0008270">
    <property type="term" value="F:zinc ion binding"/>
    <property type="evidence" value="ECO:0007669"/>
    <property type="project" value="UniProtKB-KW"/>
</dbReference>
<dbReference type="GO" id="GO:0048513">
    <property type="term" value="P:animal organ development"/>
    <property type="evidence" value="ECO:0000250"/>
    <property type="project" value="UniProtKB"/>
</dbReference>
<dbReference type="GO" id="GO:0009952">
    <property type="term" value="P:anterior/posterior pattern specification"/>
    <property type="evidence" value="ECO:0000250"/>
    <property type="project" value="UniProtKB"/>
</dbReference>
<dbReference type="GO" id="GO:0016477">
    <property type="term" value="P:cell migration"/>
    <property type="evidence" value="ECO:0000250"/>
    <property type="project" value="UniProtKB"/>
</dbReference>
<dbReference type="GO" id="GO:0030917">
    <property type="term" value="P:midbrain-hindbrain boundary development"/>
    <property type="evidence" value="ECO:0000250"/>
    <property type="project" value="UniProtKB"/>
</dbReference>
<dbReference type="GO" id="GO:0022008">
    <property type="term" value="P:neurogenesis"/>
    <property type="evidence" value="ECO:0000250"/>
    <property type="project" value="UniProtKB"/>
</dbReference>
<dbReference type="CDD" id="cd07169">
    <property type="entry name" value="NR_DBD_GCNF_like"/>
    <property type="match status" value="1"/>
</dbReference>
<dbReference type="CDD" id="cd06953">
    <property type="entry name" value="NR_LBD_DHR4_like"/>
    <property type="match status" value="1"/>
</dbReference>
<dbReference type="FunFam" id="3.30.50.10:FF:000006">
    <property type="entry name" value="Nuclear receptor subfamily 5 group A member"/>
    <property type="match status" value="1"/>
</dbReference>
<dbReference type="FunFam" id="1.10.565.10:FF:000015">
    <property type="entry name" value="Nuclear receptor subfamily 6 group A member 1"/>
    <property type="match status" value="1"/>
</dbReference>
<dbReference type="Gene3D" id="3.30.50.10">
    <property type="entry name" value="Erythroid Transcription Factor GATA-1, subunit A"/>
    <property type="match status" value="1"/>
</dbReference>
<dbReference type="Gene3D" id="1.10.565.10">
    <property type="entry name" value="Retinoid X Receptor"/>
    <property type="match status" value="1"/>
</dbReference>
<dbReference type="InterPro" id="IPR035500">
    <property type="entry name" value="NHR-like_dom_sf"/>
</dbReference>
<dbReference type="InterPro" id="IPR000536">
    <property type="entry name" value="Nucl_hrmn_rcpt_lig-bd"/>
</dbReference>
<dbReference type="InterPro" id="IPR050200">
    <property type="entry name" value="Nuclear_hormone_rcpt_NR3"/>
</dbReference>
<dbReference type="InterPro" id="IPR001723">
    <property type="entry name" value="Nuclear_hrmn_rcpt"/>
</dbReference>
<dbReference type="InterPro" id="IPR001628">
    <property type="entry name" value="Znf_hrmn_rcpt"/>
</dbReference>
<dbReference type="InterPro" id="IPR013088">
    <property type="entry name" value="Znf_NHR/GATA"/>
</dbReference>
<dbReference type="PANTHER" id="PTHR48092">
    <property type="entry name" value="KNIRPS-RELATED PROTEIN-RELATED"/>
    <property type="match status" value="1"/>
</dbReference>
<dbReference type="Pfam" id="PF00104">
    <property type="entry name" value="Hormone_recep"/>
    <property type="match status" value="1"/>
</dbReference>
<dbReference type="Pfam" id="PF00105">
    <property type="entry name" value="zf-C4"/>
    <property type="match status" value="1"/>
</dbReference>
<dbReference type="PRINTS" id="PR00398">
    <property type="entry name" value="STRDHORMONER"/>
</dbReference>
<dbReference type="PRINTS" id="PR00047">
    <property type="entry name" value="STROIDFINGER"/>
</dbReference>
<dbReference type="SMART" id="SM00430">
    <property type="entry name" value="HOLI"/>
    <property type="match status" value="1"/>
</dbReference>
<dbReference type="SMART" id="SM00399">
    <property type="entry name" value="ZnF_C4"/>
    <property type="match status" value="1"/>
</dbReference>
<dbReference type="SUPFAM" id="SSF57716">
    <property type="entry name" value="Glucocorticoid receptor-like (DNA-binding domain)"/>
    <property type="match status" value="1"/>
</dbReference>
<dbReference type="SUPFAM" id="SSF48508">
    <property type="entry name" value="Nuclear receptor ligand-binding domain"/>
    <property type="match status" value="1"/>
</dbReference>
<dbReference type="PROSITE" id="PS51843">
    <property type="entry name" value="NR_LBD"/>
    <property type="match status" value="1"/>
</dbReference>
<dbReference type="PROSITE" id="PS00031">
    <property type="entry name" value="NUCLEAR_REC_DBD_1"/>
    <property type="match status" value="1"/>
</dbReference>
<dbReference type="PROSITE" id="PS51030">
    <property type="entry name" value="NUCLEAR_REC_DBD_2"/>
    <property type="match status" value="1"/>
</dbReference>
<proteinExistence type="evidence at transcript level"/>
<gene>
    <name evidence="10" type="primary">nr6a1</name>
    <name evidence="1" type="synonym">gcnf</name>
    <name type="ORF">TNeu077g24.1</name>
</gene>
<organism>
    <name type="scientific">Xenopus tropicalis</name>
    <name type="common">Western clawed frog</name>
    <name type="synonym">Silurana tropicalis</name>
    <dbReference type="NCBI Taxonomy" id="8364"/>
    <lineage>
        <taxon>Eukaryota</taxon>
        <taxon>Metazoa</taxon>
        <taxon>Chordata</taxon>
        <taxon>Craniata</taxon>
        <taxon>Vertebrata</taxon>
        <taxon>Euteleostomi</taxon>
        <taxon>Amphibia</taxon>
        <taxon>Batrachia</taxon>
        <taxon>Anura</taxon>
        <taxon>Pipoidea</taxon>
        <taxon>Pipidae</taxon>
        <taxon>Xenopodinae</taxon>
        <taxon>Xenopus</taxon>
        <taxon>Silurana</taxon>
    </lineage>
</organism>
<comment type="function">
    <text evidence="1">Probable orphan nuclear receptor. Binds to a response element containing repeats of the motif 5'-AGGTCA-3'. Required for anterior-posterior patterning during organogenesis. Acts with chordin to play a role in patterning the midbrain-hindbrain. Isoform Em is required for integrin-mediated cell matrix interaction during neurulation and for the morphogenetic movements leading to formation of the neural tube. Also mediates the effect of retinoic acid on primary neurogenesis (By similarity).</text>
</comment>
<comment type="subunit">
    <text evidence="1">Homodimer.</text>
</comment>
<comment type="subcellular location">
    <subcellularLocation>
        <location evidence="1">Cytoplasm</location>
    </subcellularLocation>
    <subcellularLocation>
        <location evidence="1 3">Nucleus</location>
    </subcellularLocation>
</comment>
<comment type="alternative products">
    <event type="alternative splicing"/>
    <isoform>
        <id>Q66JK1-1</id>
        <name>Em</name>
        <name evidence="6">xtEm</name>
        <sequence type="displayed"/>
    </isoform>
    <isoform>
        <id>Q66JK1-2</id>
        <name>Oo</name>
        <name evidence="6">xtOo</name>
        <sequence type="described" ref="VSP_052453"/>
    </isoform>
</comment>
<comment type="similarity">
    <text evidence="2">Belongs to the nuclear hormone receptor family. NR6 subfamily.</text>
</comment>
<comment type="sequence caution" evidence="8">
    <molecule>Isoform Oo</molecule>
    <conflict type="frameshift">
        <sequence resource="EMBL" id="AL630347"/>
    </conflict>
</comment>
<sequence length="435" mass="50010">MDTWEDDRVDQRACLICGDRATGLHYGIISCEGCKGFFKRSICNKRVYRCSRDKNCVMSRKQRNRCQYCRLLKCLQMGMNRKAIREDGMPGGRNKSIGPVQISDEEIERIMSGQEFEEEANTSWSNNGDSDHSSPGNGVSESNQPSPVSTPSSSRSMELNGFGSLRDQYLGTPGPMHYQYLPHLFSYSAHPTLIPTQSRSLDPQSHTLINQLLTAEDIEPLSTPMLIEDGYKVTQSELFALLCRLADELLFRQITWVKKLPFFCDLSIKDYTCLLSTTWQELILLSSLTTYSKQIFGDLADVTSKYSPSEDELHRFSEDGMEVMERLIYLFRKFSQLKVSNEEYVCMKAINFLNQDIQGISSVSQVEQLNKRYWYVCQDFTEYRYPHQPNRFPDLMMCLPEVRYIAGKLVNVPLEQLPLLFKAFLHSCKTSLTKE</sequence>
<accession>Q66JK1</accession>
<reference evidence="8 10" key="1">
    <citation type="submission" date="2006-10" db="EMBL/GenBank/DDBJ databases">
        <authorList>
            <consortium name="Sanger Xenopus tropicalis EST/cDNA project"/>
        </authorList>
    </citation>
    <scope>NUCLEOTIDE SEQUENCE [LARGE SCALE MRNA] (ISOFORM EM)</scope>
    <scope>NUCLEOTIDE SEQUENCE [LARGE SCALE MRNA] OF 1-165 (ISOFORM OO)</scope>
    <source>
        <tissue evidence="9">Gastrula</tissue>
        <tissue evidence="10">Neurula</tissue>
    </source>
</reference>
<reference evidence="8 10" key="2">
    <citation type="submission" date="2004-08" db="EMBL/GenBank/DDBJ databases">
        <authorList>
            <consortium name="NIH - Xenopus Gene Collection (XGC) project"/>
        </authorList>
    </citation>
    <scope>NUCLEOTIDE SEQUENCE [LARGE SCALE MRNA] (ISOFORM EM)</scope>
    <source>
        <tissue evidence="9">Gastrula</tissue>
    </source>
</reference>
<reference evidence="8" key="3">
    <citation type="journal article" date="2002" name="Mech. Dev.">
        <title>Oocytes and embryos of Xenopus laevis express two different isoforms of germ cell nuclear factor (GCNF, NR6A1).</title>
        <authorList>
            <person name="Schohl A."/>
            <person name="Barreto G."/>
            <person name="Joos T.O."/>
            <person name="Dreyer C."/>
        </authorList>
    </citation>
    <scope>IDENTIFICATION</scope>
    <scope>ALTERNATIVE SPLICING</scope>
</reference>
<keyword id="KW-0025">Alternative splicing</keyword>
<keyword id="KW-0963">Cytoplasm</keyword>
<keyword id="KW-0217">Developmental protein</keyword>
<keyword id="KW-0221">Differentiation</keyword>
<keyword id="KW-0238">DNA-binding</keyword>
<keyword id="KW-0479">Metal-binding</keyword>
<keyword id="KW-0524">Neurogenesis</keyword>
<keyword id="KW-0539">Nucleus</keyword>
<keyword id="KW-0675">Receptor</keyword>
<keyword id="KW-1185">Reference proteome</keyword>
<keyword id="KW-0804">Transcription</keyword>
<keyword id="KW-0805">Transcription regulation</keyword>
<keyword id="KW-0862">Zinc</keyword>
<keyword id="KW-0863">Zinc-finger</keyword>
<name>NR6A1_XENTR</name>
<evidence type="ECO:0000250" key="1">
    <source>
        <dbReference type="UniProtKB" id="P70033"/>
    </source>
</evidence>
<evidence type="ECO:0000255" key="2"/>
<evidence type="ECO:0000255" key="3">
    <source>
        <dbReference type="PROSITE-ProRule" id="PRU00407"/>
    </source>
</evidence>
<evidence type="ECO:0000255" key="4">
    <source>
        <dbReference type="PROSITE-ProRule" id="PRU01189"/>
    </source>
</evidence>
<evidence type="ECO:0000256" key="5">
    <source>
        <dbReference type="SAM" id="MobiDB-lite"/>
    </source>
</evidence>
<evidence type="ECO:0000269" key="6">
    <source>
    </source>
</evidence>
<evidence type="ECO:0000303" key="7">
    <source ref="1"/>
</evidence>
<evidence type="ECO:0000305" key="8"/>
<evidence type="ECO:0000312" key="9">
    <source>
        <dbReference type="EMBL" id="AAH80883.1"/>
    </source>
</evidence>
<evidence type="ECO:0000312" key="10">
    <source>
        <dbReference type="EMBL" id="CAJ83090.1"/>
    </source>
</evidence>